<gene>
    <name type="primary">Cdh4</name>
</gene>
<name>CADH4_MOUSE</name>
<organism>
    <name type="scientific">Mus musculus</name>
    <name type="common">Mouse</name>
    <dbReference type="NCBI Taxonomy" id="10090"/>
    <lineage>
        <taxon>Eukaryota</taxon>
        <taxon>Metazoa</taxon>
        <taxon>Chordata</taxon>
        <taxon>Craniata</taxon>
        <taxon>Vertebrata</taxon>
        <taxon>Euteleostomi</taxon>
        <taxon>Mammalia</taxon>
        <taxon>Eutheria</taxon>
        <taxon>Euarchontoglires</taxon>
        <taxon>Glires</taxon>
        <taxon>Rodentia</taxon>
        <taxon>Myomorpha</taxon>
        <taxon>Muroidea</taxon>
        <taxon>Muridae</taxon>
        <taxon>Murinae</taxon>
        <taxon>Mus</taxon>
        <taxon>Mus</taxon>
    </lineage>
</organism>
<reference key="1">
    <citation type="journal article" date="1993" name="Mol. Endocrinol.">
        <title>Molecular cloning of mouse pancreatic islet R-cadherin: differential expression in endocrine and exocrine tissue.</title>
        <authorList>
            <person name="Hutton J.C."/>
            <person name="Christofori G."/>
            <person name="Chi W.Y."/>
            <person name="Edman U."/>
            <person name="Guest P.C."/>
            <person name="Hanahan D."/>
            <person name="Kelly R.B."/>
        </authorList>
    </citation>
    <scope>NUCLEOTIDE SEQUENCE [MRNA]</scope>
    <source>
        <tissue>Pancreatic islet</tissue>
    </source>
</reference>
<reference key="2">
    <citation type="journal article" date="1993" name="J. Cell Sci.">
        <title>Cell binding specificity of mouse R-cadherin and chromosomal mapping of the gene.</title>
        <authorList>
            <person name="Matsunami H."/>
            <person name="Miyatani S."/>
            <person name="Inoue T."/>
            <person name="Copeland N.G."/>
            <person name="Gilbert D."/>
            <person name="Jenkins N.A."/>
            <person name="Takeichi M."/>
        </authorList>
    </citation>
    <scope>NUCLEOTIDE SEQUENCE [MRNA]</scope>
</reference>
<dbReference type="EMBL" id="X69966">
    <property type="protein sequence ID" value="CAA49589.1"/>
    <property type="molecule type" value="mRNA"/>
</dbReference>
<dbReference type="EMBL" id="D14888">
    <property type="protein sequence ID" value="BAA03605.1"/>
    <property type="molecule type" value="mRNA"/>
</dbReference>
<dbReference type="CCDS" id="CCDS17164.1"/>
<dbReference type="PIR" id="A47543">
    <property type="entry name" value="A47543"/>
</dbReference>
<dbReference type="RefSeq" id="NP_033997.1">
    <property type="nucleotide sequence ID" value="NM_009867.4"/>
</dbReference>
<dbReference type="SMR" id="P39038"/>
<dbReference type="BioGRID" id="198639">
    <property type="interactions" value="1"/>
</dbReference>
<dbReference type="FunCoup" id="P39038">
    <property type="interactions" value="282"/>
</dbReference>
<dbReference type="IntAct" id="P39038">
    <property type="interactions" value="2"/>
</dbReference>
<dbReference type="MINT" id="P39038"/>
<dbReference type="STRING" id="10090.ENSMUSP00000000314"/>
<dbReference type="GlyConnect" id="2170">
    <property type="glycosylation" value="7 N-Linked glycans (2 sites)"/>
</dbReference>
<dbReference type="GlyCosmos" id="P39038">
    <property type="glycosylation" value="7 sites, 7 glycans"/>
</dbReference>
<dbReference type="GlyGen" id="P39038">
    <property type="glycosylation" value="7 sites, 11 N-linked glycans (5 sites)"/>
</dbReference>
<dbReference type="iPTMnet" id="P39038"/>
<dbReference type="PhosphoSitePlus" id="P39038"/>
<dbReference type="jPOST" id="P39038"/>
<dbReference type="PaxDb" id="10090-ENSMUSP00000000314"/>
<dbReference type="PeptideAtlas" id="P39038"/>
<dbReference type="ProteomicsDB" id="281744"/>
<dbReference type="TopDownProteomics" id="P39038"/>
<dbReference type="Antibodypedia" id="2666">
    <property type="antibodies" value="339 antibodies from 32 providers"/>
</dbReference>
<dbReference type="DNASU" id="12561"/>
<dbReference type="Ensembl" id="ENSMUST00000000314.13">
    <property type="protein sequence ID" value="ENSMUSP00000000314.7"/>
    <property type="gene ID" value="ENSMUSG00000000305.13"/>
</dbReference>
<dbReference type="GeneID" id="12561"/>
<dbReference type="KEGG" id="mmu:12561"/>
<dbReference type="UCSC" id="uc008ohv.2">
    <property type="organism name" value="mouse"/>
</dbReference>
<dbReference type="AGR" id="MGI:99218"/>
<dbReference type="CTD" id="1002"/>
<dbReference type="MGI" id="MGI:99218">
    <property type="gene designation" value="Cdh4"/>
</dbReference>
<dbReference type="VEuPathDB" id="HostDB:ENSMUSG00000000305"/>
<dbReference type="eggNOG" id="KOG3594">
    <property type="taxonomic scope" value="Eukaryota"/>
</dbReference>
<dbReference type="GeneTree" id="ENSGT00940000158073"/>
<dbReference type="HOGENOM" id="CLU_005284_2_0_1"/>
<dbReference type="InParanoid" id="P39038"/>
<dbReference type="OMA" id="QICERPG"/>
<dbReference type="OrthoDB" id="6079678at2759"/>
<dbReference type="PhylomeDB" id="P39038"/>
<dbReference type="TreeFam" id="TF316817"/>
<dbReference type="Reactome" id="R-MMU-418990">
    <property type="pathway name" value="Adherens junctions interactions"/>
</dbReference>
<dbReference type="Reactome" id="R-MMU-525793">
    <property type="pathway name" value="Myogenesis"/>
</dbReference>
<dbReference type="BioGRID-ORCS" id="12561">
    <property type="hits" value="2 hits in 79 CRISPR screens"/>
</dbReference>
<dbReference type="ChiTaRS" id="Cdh4">
    <property type="organism name" value="mouse"/>
</dbReference>
<dbReference type="PRO" id="PR:P39038"/>
<dbReference type="Proteomes" id="UP000000589">
    <property type="component" value="Chromosome 2"/>
</dbReference>
<dbReference type="RNAct" id="P39038">
    <property type="molecule type" value="protein"/>
</dbReference>
<dbReference type="Bgee" id="ENSMUSG00000000305">
    <property type="expression patterns" value="Expressed in glomerular capsule and 224 other cell types or tissues"/>
</dbReference>
<dbReference type="ExpressionAtlas" id="P39038">
    <property type="expression patterns" value="baseline and differential"/>
</dbReference>
<dbReference type="GO" id="GO:0005886">
    <property type="term" value="C:plasma membrane"/>
    <property type="evidence" value="ECO:0000314"/>
    <property type="project" value="MGI"/>
</dbReference>
<dbReference type="GO" id="GO:0005509">
    <property type="term" value="F:calcium ion binding"/>
    <property type="evidence" value="ECO:0007669"/>
    <property type="project" value="InterPro"/>
</dbReference>
<dbReference type="GO" id="GO:0048675">
    <property type="term" value="P:axon extension"/>
    <property type="evidence" value="ECO:0000314"/>
    <property type="project" value="MGI"/>
</dbReference>
<dbReference type="GO" id="GO:0007411">
    <property type="term" value="P:axon guidance"/>
    <property type="evidence" value="ECO:0000314"/>
    <property type="project" value="MGI"/>
</dbReference>
<dbReference type="GO" id="GO:0007157">
    <property type="term" value="P:heterophilic cell-cell adhesion via plasma membrane cell adhesion molecules"/>
    <property type="evidence" value="ECO:0000314"/>
    <property type="project" value="MGI"/>
</dbReference>
<dbReference type="GO" id="GO:0007156">
    <property type="term" value="P:homophilic cell adhesion via plasma membrane adhesion molecules"/>
    <property type="evidence" value="ECO:0000314"/>
    <property type="project" value="MGI"/>
</dbReference>
<dbReference type="GO" id="GO:0045773">
    <property type="term" value="P:positive regulation of axon extension"/>
    <property type="evidence" value="ECO:0000314"/>
    <property type="project" value="MGI"/>
</dbReference>
<dbReference type="CDD" id="cd11304">
    <property type="entry name" value="Cadherin_repeat"/>
    <property type="match status" value="3"/>
</dbReference>
<dbReference type="FunFam" id="2.60.40.60:FF:000011">
    <property type="entry name" value="Cadherin 1"/>
    <property type="match status" value="1"/>
</dbReference>
<dbReference type="FunFam" id="2.60.40.60:FF:000022">
    <property type="entry name" value="Cadherin 2"/>
    <property type="match status" value="1"/>
</dbReference>
<dbReference type="FunFam" id="2.60.40.60:FF:000027">
    <property type="entry name" value="Cadherin 2"/>
    <property type="match status" value="1"/>
</dbReference>
<dbReference type="FunFam" id="2.60.40.60:FF:000045">
    <property type="entry name" value="Cadherin 2"/>
    <property type="match status" value="1"/>
</dbReference>
<dbReference type="FunFam" id="4.10.900.10:FF:000001">
    <property type="entry name" value="Cadherin 2"/>
    <property type="match status" value="1"/>
</dbReference>
<dbReference type="FunFam" id="2.60.40.60:FF:000615">
    <property type="entry name" value="Cadherin-2"/>
    <property type="match status" value="1"/>
</dbReference>
<dbReference type="FunFam" id="2.60.40.60:FF:000287">
    <property type="entry name" value="Cadherin-4"/>
    <property type="match status" value="1"/>
</dbReference>
<dbReference type="Gene3D" id="2.60.40.60">
    <property type="entry name" value="Cadherins"/>
    <property type="match status" value="6"/>
</dbReference>
<dbReference type="Gene3D" id="4.10.900.10">
    <property type="entry name" value="TCF3-CBD (Catenin binding domain)"/>
    <property type="match status" value="1"/>
</dbReference>
<dbReference type="InterPro" id="IPR039808">
    <property type="entry name" value="Cadherin"/>
</dbReference>
<dbReference type="InterPro" id="IPR002126">
    <property type="entry name" value="Cadherin-like_dom"/>
</dbReference>
<dbReference type="InterPro" id="IPR015919">
    <property type="entry name" value="Cadherin-like_sf"/>
</dbReference>
<dbReference type="InterPro" id="IPR020894">
    <property type="entry name" value="Cadherin_CS"/>
</dbReference>
<dbReference type="InterPro" id="IPR014868">
    <property type="entry name" value="Cadherin_pro_dom"/>
</dbReference>
<dbReference type="InterPro" id="IPR000233">
    <property type="entry name" value="Cadherin_Y-type_LIR"/>
</dbReference>
<dbReference type="InterPro" id="IPR027397">
    <property type="entry name" value="Catenin-bd_sf"/>
</dbReference>
<dbReference type="PANTHER" id="PTHR24027">
    <property type="entry name" value="CADHERIN-23"/>
    <property type="match status" value="1"/>
</dbReference>
<dbReference type="PANTHER" id="PTHR24027:SF81">
    <property type="entry name" value="CADHERIN-4"/>
    <property type="match status" value="1"/>
</dbReference>
<dbReference type="Pfam" id="PF01049">
    <property type="entry name" value="CADH_Y-type_LIR"/>
    <property type="match status" value="1"/>
</dbReference>
<dbReference type="Pfam" id="PF00028">
    <property type="entry name" value="Cadherin"/>
    <property type="match status" value="4"/>
</dbReference>
<dbReference type="Pfam" id="PF08758">
    <property type="entry name" value="Cadherin_pro"/>
    <property type="match status" value="1"/>
</dbReference>
<dbReference type="PRINTS" id="PR00205">
    <property type="entry name" value="CADHERIN"/>
</dbReference>
<dbReference type="PRINTS" id="PR01820">
    <property type="entry name" value="DESMOCOLLIN"/>
</dbReference>
<dbReference type="SMART" id="SM00112">
    <property type="entry name" value="CA"/>
    <property type="match status" value="5"/>
</dbReference>
<dbReference type="SMART" id="SM01055">
    <property type="entry name" value="Cadherin_pro"/>
    <property type="match status" value="1"/>
</dbReference>
<dbReference type="SUPFAM" id="SSF49313">
    <property type="entry name" value="Cadherin-like"/>
    <property type="match status" value="6"/>
</dbReference>
<dbReference type="PROSITE" id="PS00232">
    <property type="entry name" value="CADHERIN_1"/>
    <property type="match status" value="3"/>
</dbReference>
<dbReference type="PROSITE" id="PS50268">
    <property type="entry name" value="CADHERIN_2"/>
    <property type="match status" value="5"/>
</dbReference>
<accession>P39038</accession>
<sequence length="913" mass="100030">MTTGSVLPLLLLGLSGALRAHREDLTVREACKAGFSEEGYTALISPNVLEGEKLLKVEFSSCVGTKGMQYETNSLDFKVGADGTVFATRELKIPSEQVAFTVTARERQSAEQWAAMVRLLVAQTSSAHSEHKKGQTVALDPSQPPNDTLLPWPQHQSSGGLRRQKRDWVIPPINVPENSRGPFPQQLVRIRSDKDNDIPIRYSITGVGADQPPMEVFNIDSMSGRMYVTRPMDREERASYHLRAHAVDMNGNKVENPIDLYIYVIDMNDNRPEFINQVYNGSVDEGSKPGTYVMTVTANDADDSTTANGMVRYRIVTQTPQSPSQNMFTINSETGDIVTVAAGLDREKVQQYTVIVQATDMEGNLNYGLSNTATAIITVTDVNDNPPEFTTSTFAGEVPENRIETVVANLTVMDRDQPHSPNWNAVYRIISGDPSGHFSVRTDPVTNEGMVTVVKAVDYELNRAFMLTVMVSNQAPLASGIQMSFQSTAGVTISVTDVNEAPYFPSNHKLIRLEEGVPAGTALTTFSAVDPDRFMQQAVRYSKLSDPANWLHINTSNGQITTAAILDRESLYTKNNVYEATFLAADNGIPPASGTGTLQIYLIDINDNAPQLLPKEAQICERPGLNAINITAADADMDPNIGPYVFELPFIPTTVRKNWTITRLNGDYAQLSLRILYLEAGVYDVPIIVTDSGNPPLSNTSVIKVKVCPCDENGDCTTVGAVAAAGLGTGAIVAILICIVILLIMVLLFVVWMKRREKERHTKQLLIDPEDDVRDNILKYDEEGGGEEDQDYDLSQLQQPEAMEHVLSKTPGVRRVDERPVGAEPQYPVRPVVPHPGDIGDFINEGLRAADNDPTAPPYDSLLVFDYEGSGSTAGSVSSLNSSSSGDQDYDYLNDWGPRFKKLADMYGGGEED</sequence>
<protein>
    <recommendedName>
        <fullName>Cadherin-4</fullName>
    </recommendedName>
    <alternativeName>
        <fullName>Retinal cadherin</fullName>
        <shortName>R-CAD</shortName>
        <shortName>R-cadherin</shortName>
    </alternativeName>
</protein>
<comment type="function">
    <text>Cadherins are calcium-dependent cell adhesion proteins. They preferentially interact with themselves in a homophilic manner in connecting cells; cadherins may thus contribute to the sorting of heterogeneous cell types. May play an important role in retinal development.</text>
</comment>
<comment type="subcellular location">
    <subcellularLocation>
        <location>Cell membrane</location>
        <topology>Single-pass type I membrane protein</topology>
    </subcellularLocation>
</comment>
<comment type="tissue specificity">
    <text>Distributed widely in mouse tissues with high levels present in brain, skeletal muscle and thymus.</text>
</comment>
<comment type="domain">
    <text evidence="1">Three calcium ions are usually bound at the interface of each cadherin domain and rigidify the connections, imparting a strong curvature to the full-length ectodomain.</text>
</comment>
<keyword id="KW-0106">Calcium</keyword>
<keyword id="KW-0130">Cell adhesion</keyword>
<keyword id="KW-1003">Cell membrane</keyword>
<keyword id="KW-0165">Cleavage on pair of basic residues</keyword>
<keyword id="KW-0325">Glycoprotein</keyword>
<keyword id="KW-0472">Membrane</keyword>
<keyword id="KW-0479">Metal-binding</keyword>
<keyword id="KW-1185">Reference proteome</keyword>
<keyword id="KW-0677">Repeat</keyword>
<keyword id="KW-0732">Signal</keyword>
<keyword id="KW-0812">Transmembrane</keyword>
<keyword id="KW-1133">Transmembrane helix</keyword>
<evidence type="ECO:0000250" key="1"/>
<evidence type="ECO:0000255" key="2"/>
<evidence type="ECO:0000255" key="3">
    <source>
        <dbReference type="PROSITE-ProRule" id="PRU00043"/>
    </source>
</evidence>
<proteinExistence type="evidence at transcript level"/>
<feature type="signal peptide" evidence="2">
    <location>
        <begin position="1"/>
        <end position="20"/>
    </location>
</feature>
<feature type="propeptide" id="PRO_0000003751" evidence="2">
    <location>
        <begin position="21"/>
        <end position="166"/>
    </location>
</feature>
<feature type="chain" id="PRO_0000003752" description="Cadherin-4">
    <location>
        <begin position="167"/>
        <end position="913"/>
    </location>
</feature>
<feature type="topological domain" description="Extracellular" evidence="2">
    <location>
        <begin position="167"/>
        <end position="731"/>
    </location>
</feature>
<feature type="transmembrane region" description="Helical" evidence="2">
    <location>
        <begin position="732"/>
        <end position="753"/>
    </location>
</feature>
<feature type="topological domain" description="Cytoplasmic" evidence="2">
    <location>
        <begin position="754"/>
        <end position="913"/>
    </location>
</feature>
<feature type="domain" description="Cadherin 1" evidence="3">
    <location>
        <begin position="167"/>
        <end position="274"/>
    </location>
</feature>
<feature type="domain" description="Cadherin 2" evidence="3">
    <location>
        <begin position="275"/>
        <end position="389"/>
    </location>
</feature>
<feature type="domain" description="Cadherin 3" evidence="3">
    <location>
        <begin position="390"/>
        <end position="504"/>
    </location>
</feature>
<feature type="domain" description="Cadherin 4" evidence="3">
    <location>
        <begin position="505"/>
        <end position="610"/>
    </location>
</feature>
<feature type="domain" description="Cadherin 5" evidence="3">
    <location>
        <begin position="611"/>
        <end position="721"/>
    </location>
</feature>
<feature type="glycosylation site" description="N-linked (GlcNAc...) asparagine" evidence="2">
    <location>
        <position position="146"/>
    </location>
</feature>
<feature type="glycosylation site" description="N-linked (GlcNAc...) asparagine" evidence="2">
    <location>
        <position position="280"/>
    </location>
</feature>
<feature type="glycosylation site" description="N-linked (GlcNAc...) asparagine" evidence="2">
    <location>
        <position position="409"/>
    </location>
</feature>
<feature type="glycosylation site" description="N-linked (GlcNAc...) asparagine" evidence="2">
    <location>
        <position position="554"/>
    </location>
</feature>
<feature type="glycosylation site" description="N-linked (GlcNAc...) asparagine" evidence="2">
    <location>
        <position position="629"/>
    </location>
</feature>
<feature type="glycosylation site" description="N-linked (GlcNAc...) asparagine" evidence="2">
    <location>
        <position position="658"/>
    </location>
</feature>
<feature type="glycosylation site" description="N-linked (GlcNAc...) asparagine" evidence="2">
    <location>
        <position position="699"/>
    </location>
</feature>